<protein>
    <recommendedName>
        <fullName>Urotensin-2 receptor</fullName>
        <shortName>UR-2-R</shortName>
    </recommendedName>
    <alternativeName>
        <fullName>G-protein coupled receptor 14</fullName>
    </alternativeName>
    <alternativeName>
        <fullName>Urotensin II receptor</fullName>
        <shortName>UR-II-R</shortName>
    </alternativeName>
</protein>
<sequence length="389" mass="42130">MALTPESPSSFPGLAATGSSVPEPPGGPNATLNSSWASPTEPSSLEDLVATGTIGTLLSAMGVVGVVGNAYTLVVTCRSLRAVASMYVYVVNLALADLLYLLSIPFIVATYVTKEWHFGDVGCRVLFGLDFLTMHASIFTLTVMSSERYAAVLRPLDTVQRPKGYRKLLALGTWLLALLLTLPVMLAMRLVRRGPKSLCLPAWGPRAHRAYLTLLFATSIAGPGLLIGLLYARLARAYRRSQRASFKRARRPGARALRLVLGIVLLFWACFLPFWLWQLLAQYHQAPLAPRTARIVNYLTTCLTYGNSCANPFLYTLLTRNYRDHLRGRVRGPGSGGGRGPVPSLQPRARFQRCSGRSLSSCSPQPTDSLVLAPAAPARPAPEGPRAPA</sequence>
<comment type="function">
    <text evidence="4">High affinity receptor for urotensin-2 and urotensin-2B. The activity of this receptor is mediated by a G-protein that activate a phosphatidylinositol-calcium second messenger system.</text>
</comment>
<comment type="subcellular location">
    <subcellularLocation>
        <location>Cell membrane</location>
        <topology>Multi-pass membrane protein</topology>
    </subcellularLocation>
</comment>
<comment type="tissue specificity">
    <text>Most abundant expression in the heart and pancreas.</text>
</comment>
<comment type="similarity">
    <text evidence="2">Belongs to the G-protein coupled receptor 1 family.</text>
</comment>
<feature type="chain" id="PRO_0000070193" description="Urotensin-2 receptor">
    <location>
        <begin position="1"/>
        <end position="389"/>
    </location>
</feature>
<feature type="topological domain" description="Extracellular" evidence="1">
    <location>
        <begin position="1"/>
        <end position="54"/>
    </location>
</feature>
<feature type="transmembrane region" description="Helical; Name=1" evidence="1">
    <location>
        <begin position="55"/>
        <end position="77"/>
    </location>
</feature>
<feature type="topological domain" description="Cytoplasmic" evidence="1">
    <location>
        <begin position="78"/>
        <end position="87"/>
    </location>
</feature>
<feature type="transmembrane region" description="Helical; Name=2" evidence="1">
    <location>
        <begin position="88"/>
        <end position="113"/>
    </location>
</feature>
<feature type="topological domain" description="Extracellular" evidence="1">
    <location>
        <begin position="114"/>
        <end position="124"/>
    </location>
</feature>
<feature type="transmembrane region" description="Helical; Name=3" evidence="1">
    <location>
        <begin position="125"/>
        <end position="146"/>
    </location>
</feature>
<feature type="topological domain" description="Cytoplasmic" evidence="1">
    <location>
        <begin position="147"/>
        <end position="167"/>
    </location>
</feature>
<feature type="transmembrane region" description="Helical; Name=4" evidence="1">
    <location>
        <begin position="168"/>
        <end position="186"/>
    </location>
</feature>
<feature type="topological domain" description="Extracellular" evidence="1">
    <location>
        <begin position="187"/>
        <end position="209"/>
    </location>
</feature>
<feature type="transmembrane region" description="Helical; Name=5" evidence="1">
    <location>
        <begin position="210"/>
        <end position="232"/>
    </location>
</feature>
<feature type="topological domain" description="Cytoplasmic" evidence="1">
    <location>
        <begin position="233"/>
        <end position="258"/>
    </location>
</feature>
<feature type="transmembrane region" description="Helical; Name=6" evidence="1">
    <location>
        <begin position="259"/>
        <end position="284"/>
    </location>
</feature>
<feature type="topological domain" description="Extracellular" evidence="1">
    <location>
        <begin position="285"/>
        <end position="297"/>
    </location>
</feature>
<feature type="transmembrane region" description="Helical; Name=7" evidence="1">
    <location>
        <begin position="298"/>
        <end position="318"/>
    </location>
</feature>
<feature type="topological domain" description="Cytoplasmic" evidence="1">
    <location>
        <begin position="319"/>
        <end position="389"/>
    </location>
</feature>
<feature type="region of interest" description="Disordered" evidence="3">
    <location>
        <begin position="1"/>
        <end position="39"/>
    </location>
</feature>
<feature type="region of interest" description="Disordered" evidence="3">
    <location>
        <begin position="328"/>
        <end position="389"/>
    </location>
</feature>
<feature type="compositionally biased region" description="Polar residues" evidence="3">
    <location>
        <begin position="1"/>
        <end position="10"/>
    </location>
</feature>
<feature type="compositionally biased region" description="Polar residues" evidence="3">
    <location>
        <begin position="30"/>
        <end position="39"/>
    </location>
</feature>
<feature type="compositionally biased region" description="Gly residues" evidence="3">
    <location>
        <begin position="331"/>
        <end position="340"/>
    </location>
</feature>
<feature type="compositionally biased region" description="Polar residues" evidence="3">
    <location>
        <begin position="355"/>
        <end position="368"/>
    </location>
</feature>
<feature type="compositionally biased region" description="Pro residues" evidence="3">
    <location>
        <begin position="377"/>
        <end position="389"/>
    </location>
</feature>
<feature type="glycosylation site" description="N-linked (GlcNAc...) asparagine" evidence="1">
    <location>
        <position position="29"/>
    </location>
</feature>
<feature type="glycosylation site" description="N-linked (GlcNAc...) asparagine" evidence="1">
    <location>
        <position position="33"/>
    </location>
</feature>
<feature type="disulfide bond" evidence="2">
    <location>
        <begin position="123"/>
        <end position="199"/>
    </location>
</feature>
<feature type="sequence variant" id="VAR_049451" description="In dbSNP:rs34442190.">
    <original>A</original>
    <variation>P</variation>
    <location>
        <position position="70"/>
    </location>
</feature>
<feature type="sequence variant" id="VAR_035768" description="In a breast cancer sample; somatic mutation; dbSNP:rs770047242." evidence="5">
    <original>S</original>
    <variation>R</variation>
    <location>
        <position position="146"/>
    </location>
</feature>
<feature type="helix" evidence="6">
    <location>
        <begin position="155"/>
        <end position="158"/>
    </location>
</feature>
<evidence type="ECO:0000255" key="1"/>
<evidence type="ECO:0000255" key="2">
    <source>
        <dbReference type="PROSITE-ProRule" id="PRU00521"/>
    </source>
</evidence>
<evidence type="ECO:0000256" key="3">
    <source>
        <dbReference type="SAM" id="MobiDB-lite"/>
    </source>
</evidence>
<evidence type="ECO:0000269" key="4">
    <source>
    </source>
</evidence>
<evidence type="ECO:0000269" key="5">
    <source>
    </source>
</evidence>
<evidence type="ECO:0007829" key="6">
    <source>
        <dbReference type="PDB" id="6HVK"/>
    </source>
</evidence>
<gene>
    <name type="primary">UTS2R</name>
    <name type="synonym">GPR14</name>
</gene>
<accession>Q9UKP6</accession>
<accession>B2RMV8</accession>
<proteinExistence type="evidence at protein level"/>
<reference key="1">
    <citation type="journal article" date="1999" name="Nature">
        <title>Human urotensin-II is a potent vasoconstrictor and agonist for the orphan receptor GPR14.</title>
        <authorList>
            <person name="Ames R.S."/>
            <person name="Sarau H.M."/>
            <person name="Chambers J.K."/>
            <person name="Willette R.N."/>
            <person name="Aiyar N.V."/>
            <person name="Romanic A.M."/>
            <person name="Louden C.S."/>
            <person name="Foley J.J."/>
            <person name="Sauermelch C.F."/>
            <person name="Coatney R.W."/>
            <person name="Ao Z."/>
            <person name="Disa J."/>
            <person name="Holmes S.D."/>
            <person name="Stadel J.M."/>
            <person name="Martin J.D."/>
            <person name="Liu W.-S."/>
            <person name="Glover G.I."/>
            <person name="Wilson S."/>
            <person name="McNulty D.E."/>
            <person name="Ellis C.E."/>
            <person name="Elshourbagy N.A."/>
            <person name="Shabon U."/>
            <person name="Trill J.J."/>
            <person name="Hay D.W.P."/>
            <person name="Ohlstein E.H."/>
            <person name="Bergsma D.J."/>
            <person name="Douglas S.A."/>
        </authorList>
    </citation>
    <scope>NUCLEOTIDE SEQUENCE [GENOMIC DNA]</scope>
</reference>
<reference key="2">
    <citation type="submission" date="2005-07" db="EMBL/GenBank/DDBJ databases">
        <authorList>
            <person name="Mural R.J."/>
            <person name="Istrail S."/>
            <person name="Sutton G.G."/>
            <person name="Florea L."/>
            <person name="Halpern A.L."/>
            <person name="Mobarry C.M."/>
            <person name="Lippert R."/>
            <person name="Walenz B."/>
            <person name="Shatkay H."/>
            <person name="Dew I."/>
            <person name="Miller J.R."/>
            <person name="Flanigan M.J."/>
            <person name="Edwards N.J."/>
            <person name="Bolanos R."/>
            <person name="Fasulo D."/>
            <person name="Halldorsson B.V."/>
            <person name="Hannenhalli S."/>
            <person name="Turner R."/>
            <person name="Yooseph S."/>
            <person name="Lu F."/>
            <person name="Nusskern D.R."/>
            <person name="Shue B.C."/>
            <person name="Zheng X.H."/>
            <person name="Zhong F."/>
            <person name="Delcher A.L."/>
            <person name="Huson D.H."/>
            <person name="Kravitz S.A."/>
            <person name="Mouchard L."/>
            <person name="Reinert K."/>
            <person name="Remington K.A."/>
            <person name="Clark A.G."/>
            <person name="Waterman M.S."/>
            <person name="Eichler E.E."/>
            <person name="Adams M.D."/>
            <person name="Hunkapiller M.W."/>
            <person name="Myers E.W."/>
            <person name="Venter J.C."/>
        </authorList>
    </citation>
    <scope>NUCLEOTIDE SEQUENCE [LARGE SCALE GENOMIC DNA]</scope>
</reference>
<reference key="3">
    <citation type="journal article" date="2004" name="Genome Res.">
        <title>The status, quality, and expansion of the NIH full-length cDNA project: the Mammalian Gene Collection (MGC).</title>
        <authorList>
            <consortium name="The MGC Project Team"/>
        </authorList>
    </citation>
    <scope>NUCLEOTIDE SEQUENCE [LARGE SCALE MRNA]</scope>
    <source>
        <tissue>Brain</tissue>
    </source>
</reference>
<reference key="4">
    <citation type="journal article" date="2003" name="Biochem. Biophys. Res. Commun.">
        <title>Identification of urotensin II-related peptide as the urotensin II-immunoreactive molecule in the rat brain.</title>
        <authorList>
            <person name="Sugo T."/>
            <person name="Murakami Y."/>
            <person name="Shimomura Y."/>
            <person name="Harada M."/>
            <person name="Abe M."/>
            <person name="Ishibashi Y."/>
            <person name="Kitada C."/>
            <person name="Miyajima N."/>
            <person name="Suzuki N."/>
            <person name="Mori M."/>
            <person name="Fujino M."/>
        </authorList>
    </citation>
    <scope>FUNCTION AS A UROTENSIN-2B RECEPTOR</scope>
</reference>
<reference key="5">
    <citation type="journal article" date="2006" name="Science">
        <title>The consensus coding sequences of human breast and colorectal cancers.</title>
        <authorList>
            <person name="Sjoeblom T."/>
            <person name="Jones S."/>
            <person name="Wood L.D."/>
            <person name="Parsons D.W."/>
            <person name="Lin J."/>
            <person name="Barber T.D."/>
            <person name="Mandelker D."/>
            <person name="Leary R.J."/>
            <person name="Ptak J."/>
            <person name="Silliman N."/>
            <person name="Szabo S."/>
            <person name="Buckhaults P."/>
            <person name="Farrell C."/>
            <person name="Meeh P."/>
            <person name="Markowitz S.D."/>
            <person name="Willis J."/>
            <person name="Dawson D."/>
            <person name="Willson J.K.V."/>
            <person name="Gazdar A.F."/>
            <person name="Hartigan J."/>
            <person name="Wu L."/>
            <person name="Liu C."/>
            <person name="Parmigiani G."/>
            <person name="Park B.H."/>
            <person name="Bachman K.E."/>
            <person name="Papadopoulos N."/>
            <person name="Vogelstein B."/>
            <person name="Kinzler K.W."/>
            <person name="Velculescu V.E."/>
        </authorList>
    </citation>
    <scope>VARIANT [LARGE SCALE ANALYSIS] ARG-146</scope>
</reference>
<name>UR2R_HUMAN</name>
<keyword id="KW-0002">3D-structure</keyword>
<keyword id="KW-1003">Cell membrane</keyword>
<keyword id="KW-1015">Disulfide bond</keyword>
<keyword id="KW-0297">G-protein coupled receptor</keyword>
<keyword id="KW-0325">Glycoprotein</keyword>
<keyword id="KW-0472">Membrane</keyword>
<keyword id="KW-1267">Proteomics identification</keyword>
<keyword id="KW-0675">Receptor</keyword>
<keyword id="KW-1185">Reference proteome</keyword>
<keyword id="KW-0807">Transducer</keyword>
<keyword id="KW-0812">Transmembrane</keyword>
<keyword id="KW-1133">Transmembrane helix</keyword>
<dbReference type="EMBL" id="AF140631">
    <property type="protein sequence ID" value="AAD55578.1"/>
    <property type="molecule type" value="Genomic_DNA"/>
</dbReference>
<dbReference type="EMBL" id="CH471099">
    <property type="protein sequence ID" value="EAW89768.1"/>
    <property type="molecule type" value="Genomic_DNA"/>
</dbReference>
<dbReference type="EMBL" id="BC136490">
    <property type="protein sequence ID" value="AAI36491.1"/>
    <property type="molecule type" value="mRNA"/>
</dbReference>
<dbReference type="CCDS" id="CCDS11810.1"/>
<dbReference type="RefSeq" id="NP_001368826.1">
    <property type="nucleotide sequence ID" value="NM_001381897.1"/>
</dbReference>
<dbReference type="RefSeq" id="NP_061822.1">
    <property type="nucleotide sequence ID" value="NM_018949.3"/>
</dbReference>
<dbReference type="PDB" id="6HVK">
    <property type="method" value="NMR"/>
    <property type="chains" value="A=153-166"/>
</dbReference>
<dbReference type="PDBsum" id="6HVK"/>
<dbReference type="SMR" id="Q9UKP6"/>
<dbReference type="BioGRID" id="109097">
    <property type="interactions" value="1"/>
</dbReference>
<dbReference type="CORUM" id="Q9UKP6"/>
<dbReference type="FunCoup" id="Q9UKP6">
    <property type="interactions" value="917"/>
</dbReference>
<dbReference type="STRING" id="9606.ENSP00000323516"/>
<dbReference type="BindingDB" id="Q9UKP6"/>
<dbReference type="ChEMBL" id="CHEMBL3764"/>
<dbReference type="GuidetoPHARMACOLOGY" id="365"/>
<dbReference type="GlyCosmos" id="Q9UKP6">
    <property type="glycosylation" value="2 sites, No reported glycans"/>
</dbReference>
<dbReference type="GlyGen" id="Q9UKP6">
    <property type="glycosylation" value="3 sites"/>
</dbReference>
<dbReference type="PhosphoSitePlus" id="Q9UKP6"/>
<dbReference type="BioMuta" id="UTS2R"/>
<dbReference type="DMDM" id="8928474"/>
<dbReference type="MassIVE" id="Q9UKP6"/>
<dbReference type="PaxDb" id="9606-ENSP00000323516"/>
<dbReference type="PeptideAtlas" id="Q9UKP6"/>
<dbReference type="Antibodypedia" id="19903">
    <property type="antibodies" value="233 antibodies from 32 providers"/>
</dbReference>
<dbReference type="DNASU" id="2837"/>
<dbReference type="Ensembl" id="ENST00000313135.5">
    <property type="protein sequence ID" value="ENSP00000323516.2"/>
    <property type="gene ID" value="ENSG00000181408.5"/>
</dbReference>
<dbReference type="GeneID" id="2837"/>
<dbReference type="KEGG" id="hsa:2837"/>
<dbReference type="MANE-Select" id="ENST00000313135.5">
    <property type="protein sequence ID" value="ENSP00000323516.2"/>
    <property type="RefSeq nucleotide sequence ID" value="NM_018949.3"/>
    <property type="RefSeq protein sequence ID" value="NP_061822.1"/>
</dbReference>
<dbReference type="UCSC" id="uc010wvl.3">
    <property type="organism name" value="human"/>
</dbReference>
<dbReference type="AGR" id="HGNC:4468"/>
<dbReference type="CTD" id="2837"/>
<dbReference type="DisGeNET" id="2837"/>
<dbReference type="GeneCards" id="UTS2R"/>
<dbReference type="HGNC" id="HGNC:4468">
    <property type="gene designation" value="UTS2R"/>
</dbReference>
<dbReference type="HPA" id="ENSG00000181408">
    <property type="expression patterns" value="Low tissue specificity"/>
</dbReference>
<dbReference type="MIM" id="600896">
    <property type="type" value="gene"/>
</dbReference>
<dbReference type="neXtProt" id="NX_Q9UKP6"/>
<dbReference type="OpenTargets" id="ENSG00000181408"/>
<dbReference type="PharmGKB" id="PA28857"/>
<dbReference type="VEuPathDB" id="HostDB:ENSG00000181408"/>
<dbReference type="eggNOG" id="KOG3656">
    <property type="taxonomic scope" value="Eukaryota"/>
</dbReference>
<dbReference type="GeneTree" id="ENSGT00940000157017"/>
<dbReference type="HOGENOM" id="CLU_009579_1_0_1"/>
<dbReference type="InParanoid" id="Q9UKP6"/>
<dbReference type="OMA" id="PMMLAIR"/>
<dbReference type="OrthoDB" id="6076970at2759"/>
<dbReference type="PAN-GO" id="Q9UKP6">
    <property type="GO annotations" value="3 GO annotations based on evolutionary models"/>
</dbReference>
<dbReference type="PhylomeDB" id="Q9UKP6"/>
<dbReference type="TreeFam" id="TF334200"/>
<dbReference type="PathwayCommons" id="Q9UKP6"/>
<dbReference type="Reactome" id="R-HSA-375276">
    <property type="pathway name" value="Peptide ligand-binding receptors"/>
</dbReference>
<dbReference type="Reactome" id="R-HSA-416476">
    <property type="pathway name" value="G alpha (q) signalling events"/>
</dbReference>
<dbReference type="SignaLink" id="Q9UKP6"/>
<dbReference type="SIGNOR" id="Q9UKP6"/>
<dbReference type="BioGRID-ORCS" id="2837">
    <property type="hits" value="11 hits in 1141 CRISPR screens"/>
</dbReference>
<dbReference type="GeneWiki" id="Urotensin-II_receptor"/>
<dbReference type="GenomeRNAi" id="2837"/>
<dbReference type="Pharos" id="Q9UKP6">
    <property type="development level" value="Tchem"/>
</dbReference>
<dbReference type="PRO" id="PR:Q9UKP6"/>
<dbReference type="Proteomes" id="UP000005640">
    <property type="component" value="Chromosome 17"/>
</dbReference>
<dbReference type="RNAct" id="Q9UKP6">
    <property type="molecule type" value="protein"/>
</dbReference>
<dbReference type="Bgee" id="ENSG00000181408">
    <property type="expression patterns" value="Expressed in right testis and 49 other cell types or tissues"/>
</dbReference>
<dbReference type="GO" id="GO:0016020">
    <property type="term" value="C:membrane"/>
    <property type="evidence" value="ECO:0000304"/>
    <property type="project" value="ProtInc"/>
</dbReference>
<dbReference type="GO" id="GO:0005886">
    <property type="term" value="C:plasma membrane"/>
    <property type="evidence" value="ECO:0000318"/>
    <property type="project" value="GO_Central"/>
</dbReference>
<dbReference type="GO" id="GO:0004930">
    <property type="term" value="F:G protein-coupled receptor activity"/>
    <property type="evidence" value="ECO:0000304"/>
    <property type="project" value="ProtInc"/>
</dbReference>
<dbReference type="GO" id="GO:0001604">
    <property type="term" value="F:urotensin II receptor activity"/>
    <property type="evidence" value="ECO:0000318"/>
    <property type="project" value="GO_Central"/>
</dbReference>
<dbReference type="GO" id="GO:0008015">
    <property type="term" value="P:blood circulation"/>
    <property type="evidence" value="ECO:0000304"/>
    <property type="project" value="ProtInc"/>
</dbReference>
<dbReference type="GO" id="GO:0097746">
    <property type="term" value="P:blood vessel diameter maintenance"/>
    <property type="evidence" value="ECO:0007669"/>
    <property type="project" value="InterPro"/>
</dbReference>
<dbReference type="GO" id="GO:0007218">
    <property type="term" value="P:neuropeptide signaling pathway"/>
    <property type="evidence" value="ECO:0000318"/>
    <property type="project" value="GO_Central"/>
</dbReference>
<dbReference type="GO" id="GO:0008217">
    <property type="term" value="P:regulation of blood pressure"/>
    <property type="evidence" value="ECO:0007669"/>
    <property type="project" value="InterPro"/>
</dbReference>
<dbReference type="GO" id="GO:0007165">
    <property type="term" value="P:signal transduction"/>
    <property type="evidence" value="ECO:0000304"/>
    <property type="project" value="ProtInc"/>
</dbReference>
<dbReference type="CDD" id="cd14999">
    <property type="entry name" value="7tmA_UII-R"/>
    <property type="match status" value="1"/>
</dbReference>
<dbReference type="FunFam" id="1.20.1070.10:FF:000183">
    <property type="entry name" value="Urotensin-2 receptor"/>
    <property type="match status" value="1"/>
</dbReference>
<dbReference type="Gene3D" id="1.20.1070.10">
    <property type="entry name" value="Rhodopsin 7-helix transmembrane proteins"/>
    <property type="match status" value="1"/>
</dbReference>
<dbReference type="InterPro" id="IPR000276">
    <property type="entry name" value="GPCR_Rhodpsn"/>
</dbReference>
<dbReference type="InterPro" id="IPR017452">
    <property type="entry name" value="GPCR_Rhodpsn_7TM"/>
</dbReference>
<dbReference type="InterPro" id="IPR000670">
    <property type="entry name" value="Urot_II_rcpt"/>
</dbReference>
<dbReference type="PANTHER" id="PTHR24230">
    <property type="entry name" value="G-PROTEIN COUPLED RECEPTOR"/>
    <property type="match status" value="1"/>
</dbReference>
<dbReference type="PANTHER" id="PTHR24230:SF60">
    <property type="entry name" value="UROTENSIN-2 RECEPTOR"/>
    <property type="match status" value="1"/>
</dbReference>
<dbReference type="Pfam" id="PF00001">
    <property type="entry name" value="7tm_1"/>
    <property type="match status" value="1"/>
</dbReference>
<dbReference type="PRINTS" id="PR00237">
    <property type="entry name" value="GPCRRHODOPSN"/>
</dbReference>
<dbReference type="PRINTS" id="PR00647">
    <property type="entry name" value="UROTENSIN2R"/>
</dbReference>
<dbReference type="SUPFAM" id="SSF81321">
    <property type="entry name" value="Family A G protein-coupled receptor-like"/>
    <property type="match status" value="1"/>
</dbReference>
<dbReference type="PROSITE" id="PS00237">
    <property type="entry name" value="G_PROTEIN_RECEP_F1_1"/>
    <property type="match status" value="1"/>
</dbReference>
<dbReference type="PROSITE" id="PS50262">
    <property type="entry name" value="G_PROTEIN_RECEP_F1_2"/>
    <property type="match status" value="1"/>
</dbReference>
<organism>
    <name type="scientific">Homo sapiens</name>
    <name type="common">Human</name>
    <dbReference type="NCBI Taxonomy" id="9606"/>
    <lineage>
        <taxon>Eukaryota</taxon>
        <taxon>Metazoa</taxon>
        <taxon>Chordata</taxon>
        <taxon>Craniata</taxon>
        <taxon>Vertebrata</taxon>
        <taxon>Euteleostomi</taxon>
        <taxon>Mammalia</taxon>
        <taxon>Eutheria</taxon>
        <taxon>Euarchontoglires</taxon>
        <taxon>Primates</taxon>
        <taxon>Haplorrhini</taxon>
        <taxon>Catarrhini</taxon>
        <taxon>Hominidae</taxon>
        <taxon>Homo</taxon>
    </lineage>
</organism>